<reference key="1">
    <citation type="submission" date="2006-08" db="EMBL/GenBank/DDBJ databases">
        <title>Complete sequence of chromosome 1 of Burkholderia cenocepacia HI2424.</title>
        <authorList>
            <person name="Copeland A."/>
            <person name="Lucas S."/>
            <person name="Lapidus A."/>
            <person name="Barry K."/>
            <person name="Detter J.C."/>
            <person name="Glavina del Rio T."/>
            <person name="Hammon N."/>
            <person name="Israni S."/>
            <person name="Pitluck S."/>
            <person name="Chain P."/>
            <person name="Malfatti S."/>
            <person name="Shin M."/>
            <person name="Vergez L."/>
            <person name="Schmutz J."/>
            <person name="Larimer F."/>
            <person name="Land M."/>
            <person name="Hauser L."/>
            <person name="Kyrpides N."/>
            <person name="Kim E."/>
            <person name="LiPuma J.J."/>
            <person name="Gonzalez C.F."/>
            <person name="Konstantinidis K."/>
            <person name="Tiedje J.M."/>
            <person name="Richardson P."/>
        </authorList>
    </citation>
    <scope>NUCLEOTIDE SEQUENCE [LARGE SCALE GENOMIC DNA]</scope>
    <source>
        <strain>HI2424</strain>
    </source>
</reference>
<sequence length="228" mass="24904">MTARRAPAVNRDVLEGMLVEGTAALDLTLTDTQRNQLLDYVALLGKWNAVYNLTAIRDPMQMLIQHILDSLSIVPHLRGRTSARVLDVGSGGGLPGIVLAIVEPGWQVTLNDIVQKKSAFQTQMRAELKLANLSVVTGRVESLQPGVEVPEKFDMIVSRAFADLSDFVKLARHLVAPGGSIWAMKGVHPDDEIARLPEGSRVTQTIRLAVPMLDAERHLFEVAVDDAN</sequence>
<protein>
    <recommendedName>
        <fullName evidence="1">Ribosomal RNA small subunit methyltransferase G</fullName>
        <ecNumber evidence="1">2.1.1.170</ecNumber>
    </recommendedName>
    <alternativeName>
        <fullName evidence="1">16S rRNA 7-methylguanosine methyltransferase</fullName>
        <shortName evidence="1">16S rRNA m7G methyltransferase</shortName>
    </alternativeName>
</protein>
<organism>
    <name type="scientific">Burkholderia cenocepacia (strain HI2424)</name>
    <dbReference type="NCBI Taxonomy" id="331272"/>
    <lineage>
        <taxon>Bacteria</taxon>
        <taxon>Pseudomonadati</taxon>
        <taxon>Pseudomonadota</taxon>
        <taxon>Betaproteobacteria</taxon>
        <taxon>Burkholderiales</taxon>
        <taxon>Burkholderiaceae</taxon>
        <taxon>Burkholderia</taxon>
        <taxon>Burkholderia cepacia complex</taxon>
    </lineage>
</organism>
<accession>A0K2X1</accession>
<comment type="function">
    <text evidence="1">Specifically methylates the N7 position of guanine in position 527 of 16S rRNA.</text>
</comment>
<comment type="catalytic activity">
    <reaction evidence="1">
        <text>guanosine(527) in 16S rRNA + S-adenosyl-L-methionine = N(7)-methylguanosine(527) in 16S rRNA + S-adenosyl-L-homocysteine</text>
        <dbReference type="Rhea" id="RHEA:42732"/>
        <dbReference type="Rhea" id="RHEA-COMP:10209"/>
        <dbReference type="Rhea" id="RHEA-COMP:10210"/>
        <dbReference type="ChEBI" id="CHEBI:57856"/>
        <dbReference type="ChEBI" id="CHEBI:59789"/>
        <dbReference type="ChEBI" id="CHEBI:74269"/>
        <dbReference type="ChEBI" id="CHEBI:74480"/>
        <dbReference type="EC" id="2.1.1.170"/>
    </reaction>
</comment>
<comment type="subcellular location">
    <subcellularLocation>
        <location evidence="1">Cytoplasm</location>
    </subcellularLocation>
</comment>
<comment type="similarity">
    <text evidence="1">Belongs to the methyltransferase superfamily. RNA methyltransferase RsmG family.</text>
</comment>
<dbReference type="EC" id="2.1.1.170" evidence="1"/>
<dbReference type="EMBL" id="CP000458">
    <property type="protein sequence ID" value="ABK06848.1"/>
    <property type="molecule type" value="Genomic_DNA"/>
</dbReference>
<dbReference type="RefSeq" id="WP_011546805.1">
    <property type="nucleotide sequence ID" value="NC_008542.1"/>
</dbReference>
<dbReference type="SMR" id="A0K2X1"/>
<dbReference type="KEGG" id="bch:Bcen2424_0094"/>
<dbReference type="HOGENOM" id="CLU_065341_2_0_4"/>
<dbReference type="GO" id="GO:0005829">
    <property type="term" value="C:cytosol"/>
    <property type="evidence" value="ECO:0007669"/>
    <property type="project" value="TreeGrafter"/>
</dbReference>
<dbReference type="GO" id="GO:0070043">
    <property type="term" value="F:rRNA (guanine-N7-)-methyltransferase activity"/>
    <property type="evidence" value="ECO:0007669"/>
    <property type="project" value="UniProtKB-UniRule"/>
</dbReference>
<dbReference type="CDD" id="cd02440">
    <property type="entry name" value="AdoMet_MTases"/>
    <property type="match status" value="1"/>
</dbReference>
<dbReference type="Gene3D" id="3.40.50.150">
    <property type="entry name" value="Vaccinia Virus protein VP39"/>
    <property type="match status" value="1"/>
</dbReference>
<dbReference type="HAMAP" id="MF_00074">
    <property type="entry name" value="16SrRNA_methyltr_G"/>
    <property type="match status" value="1"/>
</dbReference>
<dbReference type="InterPro" id="IPR003682">
    <property type="entry name" value="rRNA_ssu_MeTfrase_G"/>
</dbReference>
<dbReference type="InterPro" id="IPR029063">
    <property type="entry name" value="SAM-dependent_MTases_sf"/>
</dbReference>
<dbReference type="NCBIfam" id="TIGR00138">
    <property type="entry name" value="rsmG_gidB"/>
    <property type="match status" value="1"/>
</dbReference>
<dbReference type="PANTHER" id="PTHR31760">
    <property type="entry name" value="S-ADENOSYL-L-METHIONINE-DEPENDENT METHYLTRANSFERASES SUPERFAMILY PROTEIN"/>
    <property type="match status" value="1"/>
</dbReference>
<dbReference type="PANTHER" id="PTHR31760:SF0">
    <property type="entry name" value="S-ADENOSYL-L-METHIONINE-DEPENDENT METHYLTRANSFERASES SUPERFAMILY PROTEIN"/>
    <property type="match status" value="1"/>
</dbReference>
<dbReference type="Pfam" id="PF02527">
    <property type="entry name" value="GidB"/>
    <property type="match status" value="1"/>
</dbReference>
<dbReference type="PIRSF" id="PIRSF003078">
    <property type="entry name" value="GidB"/>
    <property type="match status" value="1"/>
</dbReference>
<dbReference type="SUPFAM" id="SSF53335">
    <property type="entry name" value="S-adenosyl-L-methionine-dependent methyltransferases"/>
    <property type="match status" value="1"/>
</dbReference>
<feature type="chain" id="PRO_0000335316" description="Ribosomal RNA small subunit methyltransferase G">
    <location>
        <begin position="1"/>
        <end position="228"/>
    </location>
</feature>
<feature type="binding site" evidence="1">
    <location>
        <position position="89"/>
    </location>
    <ligand>
        <name>S-adenosyl-L-methionine</name>
        <dbReference type="ChEBI" id="CHEBI:59789"/>
    </ligand>
</feature>
<feature type="binding site" evidence="1">
    <location>
        <position position="94"/>
    </location>
    <ligand>
        <name>S-adenosyl-L-methionine</name>
        <dbReference type="ChEBI" id="CHEBI:59789"/>
    </ligand>
</feature>
<feature type="binding site" evidence="1">
    <location>
        <begin position="140"/>
        <end position="141"/>
    </location>
    <ligand>
        <name>S-adenosyl-L-methionine</name>
        <dbReference type="ChEBI" id="CHEBI:59789"/>
    </ligand>
</feature>
<feature type="binding site" evidence="1">
    <location>
        <position position="159"/>
    </location>
    <ligand>
        <name>S-adenosyl-L-methionine</name>
        <dbReference type="ChEBI" id="CHEBI:59789"/>
    </ligand>
</feature>
<gene>
    <name evidence="1" type="primary">rsmG</name>
    <name type="ordered locus">Bcen2424_0094</name>
</gene>
<keyword id="KW-0963">Cytoplasm</keyword>
<keyword id="KW-0489">Methyltransferase</keyword>
<keyword id="KW-0698">rRNA processing</keyword>
<keyword id="KW-0949">S-adenosyl-L-methionine</keyword>
<keyword id="KW-0808">Transferase</keyword>
<proteinExistence type="inferred from homology"/>
<name>RSMG_BURCH</name>
<evidence type="ECO:0000255" key="1">
    <source>
        <dbReference type="HAMAP-Rule" id="MF_00074"/>
    </source>
</evidence>